<organism>
    <name type="scientific">Neisseria gonorrhoeae (strain ATCC 700825 / FA 1090)</name>
    <dbReference type="NCBI Taxonomy" id="242231"/>
    <lineage>
        <taxon>Bacteria</taxon>
        <taxon>Pseudomonadati</taxon>
        <taxon>Pseudomonadota</taxon>
        <taxon>Betaproteobacteria</taxon>
        <taxon>Neisseriales</taxon>
        <taxon>Neisseriaceae</taxon>
        <taxon>Neisseria</taxon>
    </lineage>
</organism>
<comment type="function">
    <text evidence="1">Binds 23S rRNA and is also seen to make contacts with the A and possibly P site tRNAs.</text>
</comment>
<comment type="subunit">
    <text evidence="1">Part of the 50S ribosomal subunit.</text>
</comment>
<comment type="similarity">
    <text evidence="1">Belongs to the universal ribosomal protein uL16 family.</text>
</comment>
<reference key="1">
    <citation type="submission" date="2003-03" db="EMBL/GenBank/DDBJ databases">
        <title>The complete genome sequence of Neisseria gonorrhoeae.</title>
        <authorList>
            <person name="Lewis L.A."/>
            <person name="Gillaspy A.F."/>
            <person name="McLaughlin R.E."/>
            <person name="Gipson M."/>
            <person name="Ducey T.F."/>
            <person name="Ownbey T."/>
            <person name="Hartman K."/>
            <person name="Nydick C."/>
            <person name="Carson M.B."/>
            <person name="Vaughn J."/>
            <person name="Thomson C."/>
            <person name="Song L."/>
            <person name="Lin S."/>
            <person name="Yuan X."/>
            <person name="Najar F."/>
            <person name="Zhan M."/>
            <person name="Ren Q."/>
            <person name="Zhu H."/>
            <person name="Qi S."/>
            <person name="Kenton S.M."/>
            <person name="Lai H."/>
            <person name="White J.D."/>
            <person name="Clifton S."/>
            <person name="Roe B.A."/>
            <person name="Dyer D.W."/>
        </authorList>
    </citation>
    <scope>NUCLEOTIDE SEQUENCE [LARGE SCALE GENOMIC DNA]</scope>
    <source>
        <strain>ATCC 700825 / FA 1090</strain>
    </source>
</reference>
<gene>
    <name evidence="1" type="primary">rplP</name>
    <name type="ordered locus">NGO_18311</name>
    <name type="ORF">NGO_1831.1</name>
</gene>
<evidence type="ECO:0000255" key="1">
    <source>
        <dbReference type="HAMAP-Rule" id="MF_01342"/>
    </source>
</evidence>
<evidence type="ECO:0000305" key="2"/>
<protein>
    <recommendedName>
        <fullName evidence="1">Large ribosomal subunit protein uL16</fullName>
    </recommendedName>
    <alternativeName>
        <fullName evidence="2">50S ribosomal protein L16</fullName>
    </alternativeName>
</protein>
<feature type="chain" id="PRO_0000062151" description="Large ribosomal subunit protein uL16">
    <location>
        <begin position="1"/>
        <end position="138"/>
    </location>
</feature>
<accession>Q5F5T4</accession>
<sequence length="138" mass="15519">MLQPTRLKYRKQQKGRNTGIATRGNKVSFGEFGLKAVGRGRLTARQIEAARRAMTRHIKRGGRIWIRVFPDKPITEKPIQVRMGGGKGNVEYYIAEIKPGKVLYEMDGVPEELAREAFELAAAKLPIPTTFVVRQVGQ</sequence>
<name>RL16_NEIG1</name>
<proteinExistence type="inferred from homology"/>
<dbReference type="EMBL" id="AE004969">
    <property type="protein sequence ID" value="AAW90453.1"/>
    <property type="molecule type" value="Genomic_DNA"/>
</dbReference>
<dbReference type="RefSeq" id="WP_002215430.1">
    <property type="nucleotide sequence ID" value="NC_002946.2"/>
</dbReference>
<dbReference type="RefSeq" id="YP_208865.1">
    <property type="nucleotide sequence ID" value="NC_002946.2"/>
</dbReference>
<dbReference type="SMR" id="Q5F5T4"/>
<dbReference type="STRING" id="242231.NGO_18311"/>
<dbReference type="GeneID" id="93387224"/>
<dbReference type="KEGG" id="ngo:NGO_18311"/>
<dbReference type="PATRIC" id="fig|242231.10.peg.2202"/>
<dbReference type="HOGENOM" id="CLU_078858_2_1_4"/>
<dbReference type="Proteomes" id="UP000000535">
    <property type="component" value="Chromosome"/>
</dbReference>
<dbReference type="GO" id="GO:0022625">
    <property type="term" value="C:cytosolic large ribosomal subunit"/>
    <property type="evidence" value="ECO:0007669"/>
    <property type="project" value="TreeGrafter"/>
</dbReference>
<dbReference type="GO" id="GO:0019843">
    <property type="term" value="F:rRNA binding"/>
    <property type="evidence" value="ECO:0007669"/>
    <property type="project" value="UniProtKB-UniRule"/>
</dbReference>
<dbReference type="GO" id="GO:0003735">
    <property type="term" value="F:structural constituent of ribosome"/>
    <property type="evidence" value="ECO:0007669"/>
    <property type="project" value="InterPro"/>
</dbReference>
<dbReference type="GO" id="GO:0000049">
    <property type="term" value="F:tRNA binding"/>
    <property type="evidence" value="ECO:0007669"/>
    <property type="project" value="UniProtKB-KW"/>
</dbReference>
<dbReference type="GO" id="GO:0006412">
    <property type="term" value="P:translation"/>
    <property type="evidence" value="ECO:0007669"/>
    <property type="project" value="UniProtKB-UniRule"/>
</dbReference>
<dbReference type="CDD" id="cd01433">
    <property type="entry name" value="Ribosomal_L16_L10e"/>
    <property type="match status" value="1"/>
</dbReference>
<dbReference type="FunFam" id="3.90.1170.10:FF:000001">
    <property type="entry name" value="50S ribosomal protein L16"/>
    <property type="match status" value="1"/>
</dbReference>
<dbReference type="Gene3D" id="3.90.1170.10">
    <property type="entry name" value="Ribosomal protein L10e/L16"/>
    <property type="match status" value="1"/>
</dbReference>
<dbReference type="HAMAP" id="MF_01342">
    <property type="entry name" value="Ribosomal_uL16"/>
    <property type="match status" value="1"/>
</dbReference>
<dbReference type="InterPro" id="IPR047873">
    <property type="entry name" value="Ribosomal_uL16"/>
</dbReference>
<dbReference type="InterPro" id="IPR000114">
    <property type="entry name" value="Ribosomal_uL16_bact-type"/>
</dbReference>
<dbReference type="InterPro" id="IPR020798">
    <property type="entry name" value="Ribosomal_uL16_CS"/>
</dbReference>
<dbReference type="InterPro" id="IPR016180">
    <property type="entry name" value="Ribosomal_uL16_dom"/>
</dbReference>
<dbReference type="InterPro" id="IPR036920">
    <property type="entry name" value="Ribosomal_uL16_sf"/>
</dbReference>
<dbReference type="NCBIfam" id="TIGR01164">
    <property type="entry name" value="rplP_bact"/>
    <property type="match status" value="1"/>
</dbReference>
<dbReference type="PANTHER" id="PTHR12220">
    <property type="entry name" value="50S/60S RIBOSOMAL PROTEIN L16"/>
    <property type="match status" value="1"/>
</dbReference>
<dbReference type="PANTHER" id="PTHR12220:SF13">
    <property type="entry name" value="LARGE RIBOSOMAL SUBUNIT PROTEIN UL16M"/>
    <property type="match status" value="1"/>
</dbReference>
<dbReference type="Pfam" id="PF00252">
    <property type="entry name" value="Ribosomal_L16"/>
    <property type="match status" value="1"/>
</dbReference>
<dbReference type="PRINTS" id="PR00060">
    <property type="entry name" value="RIBOSOMALL16"/>
</dbReference>
<dbReference type="SUPFAM" id="SSF54686">
    <property type="entry name" value="Ribosomal protein L16p/L10e"/>
    <property type="match status" value="1"/>
</dbReference>
<dbReference type="PROSITE" id="PS00586">
    <property type="entry name" value="RIBOSOMAL_L16_1"/>
    <property type="match status" value="1"/>
</dbReference>
<keyword id="KW-1185">Reference proteome</keyword>
<keyword id="KW-0687">Ribonucleoprotein</keyword>
<keyword id="KW-0689">Ribosomal protein</keyword>
<keyword id="KW-0694">RNA-binding</keyword>
<keyword id="KW-0699">rRNA-binding</keyword>
<keyword id="KW-0820">tRNA-binding</keyword>